<protein>
    <recommendedName>
        <fullName evidence="6">Endoplasmic reticulum junction formation protein lunapark-B</fullName>
    </recommendedName>
    <alternativeName>
        <fullName evidence="3">ER junction formation factor lunapark</fullName>
    </alternativeName>
</protein>
<keyword id="KW-0175">Coiled coil</keyword>
<keyword id="KW-0256">Endoplasmic reticulum</keyword>
<keyword id="KW-0472">Membrane</keyword>
<keyword id="KW-0479">Metal-binding</keyword>
<keyword id="KW-1185">Reference proteome</keyword>
<keyword id="KW-0812">Transmembrane</keyword>
<keyword id="KW-1133">Transmembrane helix</keyword>
<keyword id="KW-0862">Zinc</keyword>
<keyword id="KW-0863">Zinc-finger</keyword>
<comment type="function">
    <text evidence="2 3">Endoplasmic reticulum (ER)-shaping membrane protein that plays a role in determining ER morphology. Involved in the stabilization of nascent three-way ER tubular junctions within the ER network. May also play a role as a curvature-stabilizing protein within three-way ER tubular junction network (By similarity).</text>
</comment>
<comment type="subunit">
    <text evidence="1">Homodimer; homodimerization requires the C4-type zinc finger motif and decreases during mitosis in a phosphorylation-dependent manner.</text>
</comment>
<comment type="subcellular location">
    <subcellularLocation>
        <location evidence="3">Endoplasmic reticulum membrane</location>
        <topology evidence="3">Multi-pass membrane protein</topology>
        <orientation evidence="3">Cytoplasmic side</orientation>
    </subcellularLocation>
    <text evidence="3">Localizes at endoplasmic reticulum (ER) three-way tubular junctions, which represent crossing-points at which the tubules build a polygonal network.</text>
</comment>
<comment type="domain">
    <text evidence="3">The transmembrane domain 1 and 2 function as a signal-anchor and stop-transfer sequence, respectively, generating a double-spanning integral membrane protein with a N- and C-terminal cytoplasmic orientation. Transmembrane domain 1 and 2 are probably sufficient to mediate membrane translocation and topology formation in a N-myristoylation-independent manner. Transmembrane domain 2 is sufficient to block the protein secretion pathway. The two coiled-coil domains are necessary for its endoplasmic reticulum (ER) three-way tubular junction localization. The C4-type zinc finger motif is necessary both for its ER three-way tubular junction localization and formation.</text>
</comment>
<comment type="PTM">
    <text evidence="1">Phosphorylated. Phosphorylation occurs during interphase. Phosphorylation also occurs during mitosis; these phosphorylations reduce both its homodimerization and the ER three-way tubular junction formation.</text>
</comment>
<comment type="similarity">
    <text evidence="6">Belongs to the lunapark family.</text>
</comment>
<comment type="sequence caution" evidence="6">
    <conflict type="erroneous initiation">
        <sequence resource="EMBL-CDS" id="AAH57494"/>
    </conflict>
</comment>
<gene>
    <name type="primary">lnpkb</name>
    <name type="synonym">lnpb</name>
    <name type="ORF">wu:fj80c12</name>
</gene>
<dbReference type="EMBL" id="BC057494">
    <property type="protein sequence ID" value="AAH57494.1"/>
    <property type="status" value="ALT_INIT"/>
    <property type="molecule type" value="mRNA"/>
</dbReference>
<dbReference type="FunCoup" id="Q6PFM4">
    <property type="interactions" value="1644"/>
</dbReference>
<dbReference type="STRING" id="7955.ENSDARP00000123589"/>
<dbReference type="PaxDb" id="7955-ENSDARP00000123589"/>
<dbReference type="AGR" id="ZFIN:ZDB-GENE-030131-9455"/>
<dbReference type="ZFIN" id="ZDB-GENE-030131-9455">
    <property type="gene designation" value="lnpk"/>
</dbReference>
<dbReference type="eggNOG" id="KOG2846">
    <property type="taxonomic scope" value="Eukaryota"/>
</dbReference>
<dbReference type="InParanoid" id="Q6PFM4"/>
<dbReference type="PhylomeDB" id="Q6PFM4"/>
<dbReference type="PRO" id="PR:Q6PFM4"/>
<dbReference type="Proteomes" id="UP000000437">
    <property type="component" value="Unplaced"/>
</dbReference>
<dbReference type="GO" id="GO:0005789">
    <property type="term" value="C:endoplasmic reticulum membrane"/>
    <property type="evidence" value="ECO:0000250"/>
    <property type="project" value="UniProtKB"/>
</dbReference>
<dbReference type="GO" id="GO:0071782">
    <property type="term" value="C:endoplasmic reticulum tubular network"/>
    <property type="evidence" value="ECO:0000318"/>
    <property type="project" value="GO_Central"/>
</dbReference>
<dbReference type="GO" id="GO:0098826">
    <property type="term" value="C:endoplasmic reticulum tubular network membrane"/>
    <property type="evidence" value="ECO:0000250"/>
    <property type="project" value="UniProtKB"/>
</dbReference>
<dbReference type="GO" id="GO:0042802">
    <property type="term" value="F:identical protein binding"/>
    <property type="evidence" value="ECO:0000250"/>
    <property type="project" value="UniProtKB"/>
</dbReference>
<dbReference type="GO" id="GO:0008270">
    <property type="term" value="F:zinc ion binding"/>
    <property type="evidence" value="ECO:0007669"/>
    <property type="project" value="UniProtKB-KW"/>
</dbReference>
<dbReference type="GO" id="GO:0071788">
    <property type="term" value="P:endoplasmic reticulum tubular network maintenance"/>
    <property type="evidence" value="ECO:0000250"/>
    <property type="project" value="UniProtKB"/>
</dbReference>
<dbReference type="GO" id="GO:0071786">
    <property type="term" value="P:endoplasmic reticulum tubular network organization"/>
    <property type="evidence" value="ECO:0000318"/>
    <property type="project" value="GO_Central"/>
</dbReference>
<dbReference type="GO" id="GO:1903373">
    <property type="term" value="P:positive regulation of endoplasmic reticulum tubular network organization"/>
    <property type="evidence" value="ECO:0000250"/>
    <property type="project" value="UniProtKB"/>
</dbReference>
<dbReference type="InterPro" id="IPR040115">
    <property type="entry name" value="Lnp"/>
</dbReference>
<dbReference type="InterPro" id="IPR019273">
    <property type="entry name" value="Lunapark_Znf"/>
</dbReference>
<dbReference type="PANTHER" id="PTHR22166">
    <property type="entry name" value="ENDOPLASMIC RETICULUM JUNCTION FORMATION PROTEIN LUNAPARK"/>
    <property type="match status" value="1"/>
</dbReference>
<dbReference type="PANTHER" id="PTHR22166:SF14">
    <property type="entry name" value="ENDOPLASMIC RETICULUM JUNCTION FORMATION PROTEIN LUNAPARK-B"/>
    <property type="match status" value="1"/>
</dbReference>
<dbReference type="Pfam" id="PF10058">
    <property type="entry name" value="Zn_ribbon_10"/>
    <property type="match status" value="1"/>
</dbReference>
<evidence type="ECO:0000250" key="1">
    <source>
        <dbReference type="UniProtKB" id="Q6DFJ8"/>
    </source>
</evidence>
<evidence type="ECO:0000250" key="2">
    <source>
        <dbReference type="UniProtKB" id="Q7TQ95"/>
    </source>
</evidence>
<evidence type="ECO:0000250" key="3">
    <source>
        <dbReference type="UniProtKB" id="Q9C0E8"/>
    </source>
</evidence>
<evidence type="ECO:0000255" key="4"/>
<evidence type="ECO:0000256" key="5">
    <source>
        <dbReference type="SAM" id="MobiDB-lite"/>
    </source>
</evidence>
<evidence type="ECO:0000305" key="6"/>
<organism>
    <name type="scientific">Danio rerio</name>
    <name type="common">Zebrafish</name>
    <name type="synonym">Brachydanio rerio</name>
    <dbReference type="NCBI Taxonomy" id="7955"/>
    <lineage>
        <taxon>Eukaryota</taxon>
        <taxon>Metazoa</taxon>
        <taxon>Chordata</taxon>
        <taxon>Craniata</taxon>
        <taxon>Vertebrata</taxon>
        <taxon>Euteleostomi</taxon>
        <taxon>Actinopterygii</taxon>
        <taxon>Neopterygii</taxon>
        <taxon>Teleostei</taxon>
        <taxon>Ostariophysi</taxon>
        <taxon>Cypriniformes</taxon>
        <taxon>Danionidae</taxon>
        <taxon>Danioninae</taxon>
        <taxon>Danio</taxon>
    </lineage>
</organism>
<reference key="1">
    <citation type="submission" date="2003-09" db="EMBL/GenBank/DDBJ databases">
        <authorList>
            <consortium name="NIH - Zebrafish Gene Collection (ZGC) project"/>
        </authorList>
    </citation>
    <scope>NUCLEOTIDE SEQUENCE [LARGE SCALE MRNA]</scope>
    <source>
        <strain>AB</strain>
    </source>
</reference>
<proteinExistence type="evidence at transcript level"/>
<accession>Q6PFM4</accession>
<feature type="chain" id="PRO_0000248314" description="Endoplasmic reticulum junction formation protein lunapark-B">
    <location>
        <begin position="1"/>
        <end position="402"/>
    </location>
</feature>
<feature type="topological domain" description="Cytoplasmic" evidence="3">
    <location>
        <begin position="1"/>
        <end position="45"/>
    </location>
</feature>
<feature type="transmembrane region" description="Helical" evidence="4">
    <location>
        <begin position="46"/>
        <end position="66"/>
    </location>
</feature>
<feature type="topological domain" description="Lumenal" evidence="3">
    <location>
        <begin position="67"/>
        <end position="77"/>
    </location>
</feature>
<feature type="transmembrane region" description="Helical" evidence="4">
    <location>
        <begin position="78"/>
        <end position="98"/>
    </location>
</feature>
<feature type="topological domain" description="Cytoplasmic" evidence="3">
    <location>
        <begin position="99"/>
        <end position="402"/>
    </location>
</feature>
<feature type="zinc finger region" description="C4-type; plays a role in ER morphology" evidence="3">
    <location>
        <begin position="276"/>
        <end position="301"/>
    </location>
</feature>
<feature type="region of interest" description="Disordered" evidence="5">
    <location>
        <begin position="142"/>
        <end position="240"/>
    </location>
</feature>
<feature type="region of interest" description="Disordered" evidence="5">
    <location>
        <begin position="311"/>
        <end position="402"/>
    </location>
</feature>
<feature type="coiled-coil region" evidence="4">
    <location>
        <begin position="100"/>
        <end position="128"/>
    </location>
</feature>
<feature type="compositionally biased region" description="Polar residues" evidence="5">
    <location>
        <begin position="205"/>
        <end position="222"/>
    </location>
</feature>
<feature type="compositionally biased region" description="Basic and acidic residues" evidence="5">
    <location>
        <begin position="321"/>
        <end position="330"/>
    </location>
</feature>
<feature type="compositionally biased region" description="Acidic residues" evidence="5">
    <location>
        <begin position="341"/>
        <end position="352"/>
    </location>
</feature>
<feature type="compositionally biased region" description="Basic and acidic residues" evidence="5">
    <location>
        <begin position="385"/>
        <end position="402"/>
    </location>
</feature>
<sequence>MGAIISRWKTKPSTVELLESLDKDIKDLEEFRAKNQRLLKLWVGRLLFYSSALYLLTCLCVYYLYFPQQWGARLITALPLLAFPALVLLLRKMLIFLFSKRTERNNDKLEDLKTQKRKILEEVMETETYKNAKLILERFDPESKKKAEAEATPVRPHMTPRPGQELRQRHIAMATPGPVLGPMSPGTTPLRTAPGGPPEKGLAGSASTPAGASQAETPQQMMRRSMNPYSPGPGSGMRPPGPPLARPILPRERGAVDRVIEYLVGDGPQNRYALICQQCFSHNGMALKEEFEFVAFRCAYCYFMNPARKTRPQAPRLPEFSFERRLRSESPETQSSAATETPEDSDAPEDDMERTTSADPQNPAADEAPVLQESETEESQPQDVPHAEAEALEEQKKEDESN</sequence>
<name>LNPB_DANRE</name>